<evidence type="ECO:0000255" key="1">
    <source>
        <dbReference type="HAMAP-Rule" id="MF_00004"/>
    </source>
</evidence>
<name>APT_PELPB</name>
<reference key="1">
    <citation type="submission" date="2008-06" db="EMBL/GenBank/DDBJ databases">
        <title>Complete sequence of Pelodictyon phaeoclathratiforme BU-1.</title>
        <authorList>
            <consortium name="US DOE Joint Genome Institute"/>
            <person name="Lucas S."/>
            <person name="Copeland A."/>
            <person name="Lapidus A."/>
            <person name="Glavina del Rio T."/>
            <person name="Dalin E."/>
            <person name="Tice H."/>
            <person name="Bruce D."/>
            <person name="Goodwin L."/>
            <person name="Pitluck S."/>
            <person name="Schmutz J."/>
            <person name="Larimer F."/>
            <person name="Land M."/>
            <person name="Hauser L."/>
            <person name="Kyrpides N."/>
            <person name="Mikhailova N."/>
            <person name="Liu Z."/>
            <person name="Li T."/>
            <person name="Zhao F."/>
            <person name="Overmann J."/>
            <person name="Bryant D.A."/>
            <person name="Richardson P."/>
        </authorList>
    </citation>
    <scope>NUCLEOTIDE SEQUENCE [LARGE SCALE GENOMIC DNA]</scope>
    <source>
        <strain>DSM 5477 / BU-1</strain>
    </source>
</reference>
<keyword id="KW-0963">Cytoplasm</keyword>
<keyword id="KW-0328">Glycosyltransferase</keyword>
<keyword id="KW-0660">Purine salvage</keyword>
<keyword id="KW-1185">Reference proteome</keyword>
<keyword id="KW-0808">Transferase</keyword>
<protein>
    <recommendedName>
        <fullName evidence="1">Adenine phosphoribosyltransferase</fullName>
        <shortName evidence="1">APRT</shortName>
        <ecNumber evidence="1">2.4.2.7</ecNumber>
    </recommendedName>
</protein>
<feature type="chain" id="PRO_1000088989" description="Adenine phosphoribosyltransferase">
    <location>
        <begin position="1"/>
        <end position="177"/>
    </location>
</feature>
<proteinExistence type="inferred from homology"/>
<comment type="function">
    <text evidence="1">Catalyzes a salvage reaction resulting in the formation of AMP, that is energically less costly than de novo synthesis.</text>
</comment>
<comment type="catalytic activity">
    <reaction evidence="1">
        <text>AMP + diphosphate = 5-phospho-alpha-D-ribose 1-diphosphate + adenine</text>
        <dbReference type="Rhea" id="RHEA:16609"/>
        <dbReference type="ChEBI" id="CHEBI:16708"/>
        <dbReference type="ChEBI" id="CHEBI:33019"/>
        <dbReference type="ChEBI" id="CHEBI:58017"/>
        <dbReference type="ChEBI" id="CHEBI:456215"/>
        <dbReference type="EC" id="2.4.2.7"/>
    </reaction>
</comment>
<comment type="pathway">
    <text evidence="1">Purine metabolism; AMP biosynthesis via salvage pathway; AMP from adenine: step 1/1.</text>
</comment>
<comment type="subunit">
    <text evidence="1">Homodimer.</text>
</comment>
<comment type="subcellular location">
    <subcellularLocation>
        <location evidence="1">Cytoplasm</location>
    </subcellularLocation>
</comment>
<comment type="similarity">
    <text evidence="1">Belongs to the purine/pyrimidine phosphoribosyltransferase family.</text>
</comment>
<gene>
    <name evidence="1" type="primary">apt</name>
    <name type="ordered locus">Ppha_0460</name>
</gene>
<organism>
    <name type="scientific">Pelodictyon phaeoclathratiforme (strain DSM 5477 / BU-1)</name>
    <dbReference type="NCBI Taxonomy" id="324925"/>
    <lineage>
        <taxon>Bacteria</taxon>
        <taxon>Pseudomonadati</taxon>
        <taxon>Chlorobiota</taxon>
        <taxon>Chlorobiia</taxon>
        <taxon>Chlorobiales</taxon>
        <taxon>Chlorobiaceae</taxon>
        <taxon>Chlorobium/Pelodictyon group</taxon>
        <taxon>Pelodictyon</taxon>
    </lineage>
</organism>
<sequence length="177" mass="19137">MPIKSRIRSIPDYPKKGILFRDITTLIKDPVGFRLVIDSLTQHYLQEGMDFDVIVGIEARGFIIGGALSYALGKGFIPVRKPGKLPADVVSQEYQLEYGSDTIEIHVDALVAGQKVLLVDDLLATGGTALAAAALVEKVGGIVAEMAFIVNLPDIGGERKILEKGYSIYSLTDFEGE</sequence>
<accession>B4SCV2</accession>
<dbReference type="EC" id="2.4.2.7" evidence="1"/>
<dbReference type="EMBL" id="CP001110">
    <property type="protein sequence ID" value="ACF42786.1"/>
    <property type="molecule type" value="Genomic_DNA"/>
</dbReference>
<dbReference type="RefSeq" id="WP_012507281.1">
    <property type="nucleotide sequence ID" value="NC_011060.1"/>
</dbReference>
<dbReference type="SMR" id="B4SCV2"/>
<dbReference type="STRING" id="324925.Ppha_0460"/>
<dbReference type="KEGG" id="pph:Ppha_0460"/>
<dbReference type="eggNOG" id="COG0503">
    <property type="taxonomic scope" value="Bacteria"/>
</dbReference>
<dbReference type="HOGENOM" id="CLU_063339_3_0_10"/>
<dbReference type="OrthoDB" id="9803963at2"/>
<dbReference type="UniPathway" id="UPA00588">
    <property type="reaction ID" value="UER00646"/>
</dbReference>
<dbReference type="Proteomes" id="UP000002724">
    <property type="component" value="Chromosome"/>
</dbReference>
<dbReference type="GO" id="GO:0005737">
    <property type="term" value="C:cytoplasm"/>
    <property type="evidence" value="ECO:0007669"/>
    <property type="project" value="UniProtKB-SubCell"/>
</dbReference>
<dbReference type="GO" id="GO:0002055">
    <property type="term" value="F:adenine binding"/>
    <property type="evidence" value="ECO:0007669"/>
    <property type="project" value="TreeGrafter"/>
</dbReference>
<dbReference type="GO" id="GO:0003999">
    <property type="term" value="F:adenine phosphoribosyltransferase activity"/>
    <property type="evidence" value="ECO:0007669"/>
    <property type="project" value="UniProtKB-UniRule"/>
</dbReference>
<dbReference type="GO" id="GO:0016208">
    <property type="term" value="F:AMP binding"/>
    <property type="evidence" value="ECO:0007669"/>
    <property type="project" value="TreeGrafter"/>
</dbReference>
<dbReference type="GO" id="GO:0006168">
    <property type="term" value="P:adenine salvage"/>
    <property type="evidence" value="ECO:0007669"/>
    <property type="project" value="InterPro"/>
</dbReference>
<dbReference type="GO" id="GO:0044209">
    <property type="term" value="P:AMP salvage"/>
    <property type="evidence" value="ECO:0007669"/>
    <property type="project" value="UniProtKB-UniRule"/>
</dbReference>
<dbReference type="GO" id="GO:0006166">
    <property type="term" value="P:purine ribonucleoside salvage"/>
    <property type="evidence" value="ECO:0007669"/>
    <property type="project" value="UniProtKB-KW"/>
</dbReference>
<dbReference type="CDD" id="cd06223">
    <property type="entry name" value="PRTases_typeI"/>
    <property type="match status" value="1"/>
</dbReference>
<dbReference type="FunFam" id="3.40.50.2020:FF:000004">
    <property type="entry name" value="Adenine phosphoribosyltransferase"/>
    <property type="match status" value="1"/>
</dbReference>
<dbReference type="Gene3D" id="3.40.50.2020">
    <property type="match status" value="1"/>
</dbReference>
<dbReference type="HAMAP" id="MF_00004">
    <property type="entry name" value="Aden_phosphoribosyltr"/>
    <property type="match status" value="1"/>
</dbReference>
<dbReference type="InterPro" id="IPR005764">
    <property type="entry name" value="Ade_phspho_trans"/>
</dbReference>
<dbReference type="InterPro" id="IPR000836">
    <property type="entry name" value="PRibTrfase_dom"/>
</dbReference>
<dbReference type="InterPro" id="IPR029057">
    <property type="entry name" value="PRTase-like"/>
</dbReference>
<dbReference type="InterPro" id="IPR050054">
    <property type="entry name" value="UPRTase/APRTase"/>
</dbReference>
<dbReference type="NCBIfam" id="TIGR01090">
    <property type="entry name" value="apt"/>
    <property type="match status" value="1"/>
</dbReference>
<dbReference type="NCBIfam" id="NF002634">
    <property type="entry name" value="PRK02304.1-3"/>
    <property type="match status" value="1"/>
</dbReference>
<dbReference type="NCBIfam" id="NF002636">
    <property type="entry name" value="PRK02304.1-5"/>
    <property type="match status" value="1"/>
</dbReference>
<dbReference type="PANTHER" id="PTHR32315">
    <property type="entry name" value="ADENINE PHOSPHORIBOSYLTRANSFERASE"/>
    <property type="match status" value="1"/>
</dbReference>
<dbReference type="PANTHER" id="PTHR32315:SF3">
    <property type="entry name" value="ADENINE PHOSPHORIBOSYLTRANSFERASE"/>
    <property type="match status" value="1"/>
</dbReference>
<dbReference type="Pfam" id="PF00156">
    <property type="entry name" value="Pribosyltran"/>
    <property type="match status" value="1"/>
</dbReference>
<dbReference type="SUPFAM" id="SSF53271">
    <property type="entry name" value="PRTase-like"/>
    <property type="match status" value="1"/>
</dbReference>
<dbReference type="PROSITE" id="PS00103">
    <property type="entry name" value="PUR_PYR_PR_TRANSFER"/>
    <property type="match status" value="1"/>
</dbReference>